<accession>P52650</accession>
<proteinExistence type="evidence at transcript level"/>
<keyword id="KW-1003">Cell membrane</keyword>
<keyword id="KW-0249">Electron transport</keyword>
<keyword id="KW-0349">Heme</keyword>
<keyword id="KW-0408">Iron</keyword>
<keyword id="KW-1017">Isopeptide bond</keyword>
<keyword id="KW-0472">Membrane</keyword>
<keyword id="KW-0479">Metal-binding</keyword>
<keyword id="KW-0521">NADP</keyword>
<keyword id="KW-0560">Oxidoreductase</keyword>
<keyword id="KW-0597">Phosphoprotein</keyword>
<keyword id="KW-1185">Reference proteome</keyword>
<keyword id="KW-0812">Transmembrane</keyword>
<keyword id="KW-1133">Transmembrane helix</keyword>
<keyword id="KW-0813">Transport</keyword>
<keyword id="KW-0832">Ubl conjugation</keyword>
<feature type="initiator methionine" description="Removed" evidence="1">
    <location>
        <position position="1"/>
    </location>
</feature>
<feature type="chain" id="PRO_0000144909" description="Cytochrome b-245 light chain">
    <location>
        <begin position="2"/>
        <end position="192"/>
    </location>
</feature>
<feature type="topological domain" description="Cytoplasmic" evidence="4">
    <location>
        <begin position="2"/>
        <end position="7"/>
    </location>
</feature>
<feature type="transmembrane region" description="Helical" evidence="1">
    <location>
        <begin position="8"/>
        <end position="30"/>
    </location>
</feature>
<feature type="topological domain" description="Extracellular" evidence="4">
    <location>
        <begin position="31"/>
        <end position="35"/>
    </location>
</feature>
<feature type="transmembrane region" description="Helical" evidence="1">
    <location>
        <begin position="36"/>
        <end position="53"/>
    </location>
</feature>
<feature type="topological domain" description="Cytoplasmic" evidence="4">
    <location>
        <begin position="54"/>
        <end position="69"/>
    </location>
</feature>
<feature type="intramembrane region" evidence="1">
    <location>
        <begin position="70"/>
        <end position="80"/>
    </location>
</feature>
<feature type="topological domain" description="Cytoplasmic" evidence="4">
    <location>
        <begin position="81"/>
        <end position="86"/>
    </location>
</feature>
<feature type="transmembrane region" description="Helical" evidence="1">
    <location>
        <begin position="87"/>
        <end position="104"/>
    </location>
</feature>
<feature type="topological domain" description="Extracellular" evidence="4">
    <location>
        <position position="105"/>
    </location>
</feature>
<feature type="transmembrane region" description="Helical" evidence="1">
    <location>
        <begin position="106"/>
        <end position="126"/>
    </location>
</feature>
<feature type="topological domain" description="Cytoplasmic" evidence="4">
    <location>
        <begin position="127"/>
        <end position="192"/>
    </location>
</feature>
<feature type="region of interest" description="Disordered" evidence="3">
    <location>
        <begin position="134"/>
        <end position="192"/>
    </location>
</feature>
<feature type="modified residue" description="Phosphothreonine" evidence="1">
    <location>
        <position position="147"/>
    </location>
</feature>
<feature type="cross-link" description="Glycyl lysine isopeptide (Lys-Gly) (interchain with G-Cter in ubiquitin)" evidence="2">
    <location>
        <position position="149"/>
    </location>
</feature>
<dbReference type="EMBL" id="U02477">
    <property type="protein sequence ID" value="AAA64635.1"/>
    <property type="molecule type" value="mRNA"/>
</dbReference>
<dbReference type="RefSeq" id="NP_999432.1">
    <property type="nucleotide sequence ID" value="NM_214267.1"/>
</dbReference>
<dbReference type="SMR" id="P52650"/>
<dbReference type="FunCoup" id="P52650">
    <property type="interactions" value="405"/>
</dbReference>
<dbReference type="STRING" id="9823.ENSSSCP00000055460"/>
<dbReference type="GeneID" id="397507"/>
<dbReference type="KEGG" id="ssc:397507"/>
<dbReference type="CTD" id="1535"/>
<dbReference type="InParanoid" id="P52650"/>
<dbReference type="OrthoDB" id="2445232at2759"/>
<dbReference type="Proteomes" id="UP000008227">
    <property type="component" value="Unplaced"/>
</dbReference>
<dbReference type="Proteomes" id="UP000314985">
    <property type="component" value="Unplaced"/>
</dbReference>
<dbReference type="Proteomes" id="UP000694570">
    <property type="component" value="Unplaced"/>
</dbReference>
<dbReference type="Proteomes" id="UP000694571">
    <property type="component" value="Unplaced"/>
</dbReference>
<dbReference type="Proteomes" id="UP000694720">
    <property type="component" value="Unplaced"/>
</dbReference>
<dbReference type="Proteomes" id="UP000694722">
    <property type="component" value="Unplaced"/>
</dbReference>
<dbReference type="Proteomes" id="UP000694723">
    <property type="component" value="Unplaced"/>
</dbReference>
<dbReference type="Proteomes" id="UP000694724">
    <property type="component" value="Unplaced"/>
</dbReference>
<dbReference type="Proteomes" id="UP000694725">
    <property type="component" value="Unplaced"/>
</dbReference>
<dbReference type="Proteomes" id="UP000694726">
    <property type="component" value="Unplaced"/>
</dbReference>
<dbReference type="Proteomes" id="UP000694727">
    <property type="component" value="Unplaced"/>
</dbReference>
<dbReference type="Proteomes" id="UP000694728">
    <property type="component" value="Unplaced"/>
</dbReference>
<dbReference type="GO" id="GO:0043020">
    <property type="term" value="C:NADPH oxidase complex"/>
    <property type="evidence" value="ECO:0000250"/>
    <property type="project" value="UniProtKB"/>
</dbReference>
<dbReference type="GO" id="GO:0005886">
    <property type="term" value="C:plasma membrane"/>
    <property type="evidence" value="ECO:0000250"/>
    <property type="project" value="UniProtKB"/>
</dbReference>
<dbReference type="GO" id="GO:0020037">
    <property type="term" value="F:heme binding"/>
    <property type="evidence" value="ECO:0007669"/>
    <property type="project" value="InterPro"/>
</dbReference>
<dbReference type="GO" id="GO:0046872">
    <property type="term" value="F:metal ion binding"/>
    <property type="evidence" value="ECO:0007669"/>
    <property type="project" value="UniProtKB-KW"/>
</dbReference>
<dbReference type="GO" id="GO:0016491">
    <property type="term" value="F:oxidoreductase activity"/>
    <property type="evidence" value="ECO:0007669"/>
    <property type="project" value="UniProtKB-KW"/>
</dbReference>
<dbReference type="GO" id="GO:0045087">
    <property type="term" value="P:innate immune response"/>
    <property type="evidence" value="ECO:0000250"/>
    <property type="project" value="UniProtKB"/>
</dbReference>
<dbReference type="GO" id="GO:0042554">
    <property type="term" value="P:superoxide anion generation"/>
    <property type="evidence" value="ECO:0000318"/>
    <property type="project" value="GO_Central"/>
</dbReference>
<dbReference type="InterPro" id="IPR007732">
    <property type="entry name" value="Cyt_b558_asu"/>
</dbReference>
<dbReference type="PANTHER" id="PTHR15168">
    <property type="entry name" value="CYTOCHROME B-245 LIGHT CHAIN"/>
    <property type="match status" value="1"/>
</dbReference>
<dbReference type="PANTHER" id="PTHR15168:SF0">
    <property type="entry name" value="CYTOCHROME B-245 LIGHT CHAIN"/>
    <property type="match status" value="1"/>
</dbReference>
<dbReference type="Pfam" id="PF05038">
    <property type="entry name" value="Cytochrom_B558a"/>
    <property type="match status" value="1"/>
</dbReference>
<dbReference type="PIRSF" id="PIRSF019635">
    <property type="entry name" value="Cytochr_b558a"/>
    <property type="match status" value="1"/>
</dbReference>
<evidence type="ECO:0000250" key="1">
    <source>
        <dbReference type="UniProtKB" id="P13498"/>
    </source>
</evidence>
<evidence type="ECO:0000250" key="2">
    <source>
        <dbReference type="UniProtKB" id="Q61462"/>
    </source>
</evidence>
<evidence type="ECO:0000256" key="3">
    <source>
        <dbReference type="SAM" id="MobiDB-lite"/>
    </source>
</evidence>
<evidence type="ECO:0000305" key="4"/>
<sequence>MGQIEWAMWANEQALASGLILMTGGIVATAGQFTQWYLGTYSIAAGVLVCLLEYPRGRRTKGSTMERCEQKYMTKVVKAFGPLSRNYYIRAFLHLGLSVPAGFLLATILGTACLAIASGIYLLAAIRGEQWTPIEPKPKERPQVGGTIKQPPSNPPPRPPPEARKKPGEEAVAGVPRGAPRKTPCPVTDEVV</sequence>
<protein>
    <recommendedName>
        <fullName evidence="1">Cytochrome b-245 light chain</fullName>
    </recommendedName>
    <alternativeName>
        <fullName>Cytochrome b(558) alpha chain</fullName>
    </alternativeName>
    <alternativeName>
        <fullName>Cytochrome b558 subunit alpha</fullName>
    </alternativeName>
    <alternativeName>
        <fullName>Neutrophil cytochrome b 22 kDa polypeptide</fullName>
    </alternativeName>
    <alternativeName>
        <fullName>Superoxide-generating NADPH oxidase light chain subunit</fullName>
    </alternativeName>
    <alternativeName>
        <fullName>p22 phagocyte B-cytochrome</fullName>
    </alternativeName>
    <alternativeName>
        <fullName>p22-phox</fullName>
        <shortName>p22phox</shortName>
    </alternativeName>
</protein>
<gene>
    <name evidence="1" type="primary">CYBA</name>
</gene>
<reference key="1">
    <citation type="journal article" date="1994" name="Gene">
        <title>Cloning and expression of the gene encoding the porcine NADPH oxidase light-chain subunit (p22-phox).</title>
        <authorList>
            <person name="Zhou Y."/>
            <person name="Murtaugh M.P."/>
        </authorList>
    </citation>
    <scope>NUCLEOTIDE SEQUENCE [MRNA]</scope>
    <source>
        <tissue>Lung</tissue>
    </source>
</reference>
<comment type="function">
    <text evidence="1">Subunit of NADPH oxidase complexes that is required for the NADPH oxidase activity that generates, in various cell types, superoxide from molecular oxygen utilizing NADPH as an electron donor. Subunit of the phagocyte NADPH oxidase complex that mediates the transfer of electrons from cytosolic NADPH to O2 to produce the superoxide anion (O2(-)). In the activated complex, electrons are first transferred from NADPH to flavin adenine dinucleotide (FAD) and subsequently transferred via two heme molecules to molecular oxygen, producing superoxide through an outer-sphere reaction. Activation of the NADPH oxidase complex is initiated by the assembly of cytosolic subunits of the NADPH oxidase complex with the core NADPH oxidase complex to form a complex at the plasma membrane or phagosomal membrane. This activation process is initiated by phosphorylation dependent binding of the cytosolic NCF1/p47-phox subunit to the C-terminus of CYBA/p22-phox. Aassociates with NOX3 to form a functional NADPH oxidase constitutively generating superoxide.</text>
</comment>
<comment type="subunit">
    <text evidence="1 2">Component of the phagocyte NADPH oxidase core complex/cytochrome b558 complex, composed of CYBB (heavy chain (beta)) and CYBA (light chain (alpha)). Component of the phagocyte NADPH oxidase complex composed of an obligatory core heterodimer formed by the membrane proteins CYBA and CYBB and the cytosolic regulatory subunits NCF1/p47-phox, NCF2/p67-phox, NCF4/p40-phox and the small GTPase RAC1 or RAC2. Interacts with NCF1 (via SH3 domain) (By similarity). Interacts with SH3PXD2A (By similarity). Interacts with DUOX1, DUOX2 and TPO. Interacts with NOX4; this interaction mediates superoxide generation. Interacts with calprotectin (S100A8/9) (By similarity). Interacts with GBP7 (By similarity). Interacts with NOXO1. Forms a heterodimer with NOX3 and is essential for activity and cell membrane localization of NOX3. Interacts with NOX1 (By similarity).</text>
</comment>
<comment type="subcellular location">
    <subcellularLocation>
        <location evidence="1">Cell membrane</location>
        <topology evidence="1">Multi-pass membrane protein</topology>
    </subcellularLocation>
</comment>
<comment type="PTM">
    <text evidence="1">Phosphorylation at Thr-147 enhances NADPH oxidase activity by promoting NCF1/p47-phox binding.</text>
</comment>
<comment type="PTM">
    <text evidence="2">Ubiquitinated at Lys-149 likely by RNF145.</text>
</comment>
<comment type="similarity">
    <text evidence="4">Belongs to the p22phox family.</text>
</comment>
<name>CY24A_PIG</name>
<organism>
    <name type="scientific">Sus scrofa</name>
    <name type="common">Pig</name>
    <dbReference type="NCBI Taxonomy" id="9823"/>
    <lineage>
        <taxon>Eukaryota</taxon>
        <taxon>Metazoa</taxon>
        <taxon>Chordata</taxon>
        <taxon>Craniata</taxon>
        <taxon>Vertebrata</taxon>
        <taxon>Euteleostomi</taxon>
        <taxon>Mammalia</taxon>
        <taxon>Eutheria</taxon>
        <taxon>Laurasiatheria</taxon>
        <taxon>Artiodactyla</taxon>
        <taxon>Suina</taxon>
        <taxon>Suidae</taxon>
        <taxon>Sus</taxon>
    </lineage>
</organism>